<protein>
    <recommendedName>
        <fullName>Transmembrane and coiled-coil domain-containing protein 4</fullName>
    </recommendedName>
</protein>
<sequence length="634" mass="67910">MAMWNRPCQRLPQQPLVAEPTAEGEPHLPTGRELTEANRFAYAALCGISLSQLFPEPEHSSFCTEFMAGLVQWLELSEAVLPTMTAFASGLGGEGADVFVQILLKDPILKDDPTVITQDLLSFSLKDGHYDARARVLVCHMTSLLQVPLEELDVLEEMFLESLKEIKEEESEMAEASRKKKENRRKWKRYLLIGLATVGGGTVIGVTGGLAAPLVAAGAATIIGSAGAAALGSAAGIAIMTSLFGAAGAGLTGYKMKKRVGAIEEFTFLPLTEGRQLHITIAVTGWLASGKYRTFSAPWAALAHSREQYCLAWEAKYLMELGNALETILSGLANMVAQEALKYTVLSGIVAALTWPASLLSVANVIDNPWGVCLHRSAEVGKHLAHILLSRQQGRRPVTLIGFSLGARVIYFCLQEMAQEKDCQGIIEDVILLGAPVEGEAKHWEPFRKVVSGRIINGYCRGDWLLSFVYRTSSVQLRVAGLQPVLLQDRRVENVDLTSVVSGHLDYAKQMDAILKAVGIRTKPGWDEKGLLLAPGCLPSEEPRQAAAAASSGETPHQVGQTQGPISGDTSKLAMSTDPSQAQVPVGLDQSEGASLPAAASPERPPICSHGMDPNPLGCPDCACKTQGPSTGLD</sequence>
<dbReference type="EMBL" id="BX640987">
    <property type="protein sequence ID" value="CAE45994.1"/>
    <property type="molecule type" value="mRNA"/>
</dbReference>
<dbReference type="EMBL" id="AL031727">
    <property type="status" value="NOT_ANNOTATED_CDS"/>
    <property type="molecule type" value="Genomic_DNA"/>
</dbReference>
<dbReference type="EMBL" id="AL031730">
    <property type="status" value="NOT_ANNOTATED_CDS"/>
    <property type="molecule type" value="Genomic_DNA"/>
</dbReference>
<dbReference type="EMBL" id="BC053600">
    <property type="protein sequence ID" value="AAH53600.1"/>
    <property type="molecule type" value="mRNA"/>
</dbReference>
<dbReference type="EMBL" id="AL049846">
    <property type="protein sequence ID" value="CAB42850.1"/>
    <property type="status" value="ALT_INIT"/>
    <property type="molecule type" value="mRNA"/>
</dbReference>
<dbReference type="EMBL" id="AL049847">
    <property type="protein sequence ID" value="CAB42851.1"/>
    <property type="status" value="ALT_INIT"/>
    <property type="molecule type" value="mRNA"/>
</dbReference>
<dbReference type="CCDS" id="CCDS198.1">
    <molecule id="Q5TGY1-1"/>
</dbReference>
<dbReference type="RefSeq" id="NP_001336041.1">
    <molecule id="Q5TGY1-1"/>
    <property type="nucleotide sequence ID" value="NM_001349112.3"/>
</dbReference>
<dbReference type="RefSeq" id="NP_001336042.1">
    <molecule id="Q5TGY1-1"/>
    <property type="nucleotide sequence ID" value="NM_001349113.3"/>
</dbReference>
<dbReference type="RefSeq" id="NP_001336043.1">
    <molecule id="Q5TGY1-1"/>
    <property type="nucleotide sequence ID" value="NM_001349114.3"/>
</dbReference>
<dbReference type="RefSeq" id="NP_859070.3">
    <molecule id="Q5TGY1-1"/>
    <property type="nucleotide sequence ID" value="NM_181719.4"/>
</dbReference>
<dbReference type="RefSeq" id="XP_005245879.1">
    <property type="nucleotide sequence ID" value="XM_005245822.4"/>
</dbReference>
<dbReference type="RefSeq" id="XP_005245881.1">
    <property type="nucleotide sequence ID" value="XM_005245824.4"/>
</dbReference>
<dbReference type="RefSeq" id="XP_005245884.1">
    <property type="nucleotide sequence ID" value="XM_005245827.3"/>
</dbReference>
<dbReference type="RefSeq" id="XP_011539487.1">
    <molecule id="Q5TGY1-1"/>
    <property type="nucleotide sequence ID" value="XM_011541185.4"/>
</dbReference>
<dbReference type="RefSeq" id="XP_011539488.1">
    <property type="nucleotide sequence ID" value="XM_011541186.2"/>
</dbReference>
<dbReference type="RefSeq" id="XP_016856402.1">
    <property type="nucleotide sequence ID" value="XM_017000913.1"/>
</dbReference>
<dbReference type="RefSeq" id="XP_016856407.1">
    <property type="nucleotide sequence ID" value="XM_017000918.1"/>
</dbReference>
<dbReference type="RefSeq" id="XP_016856408.1">
    <property type="nucleotide sequence ID" value="XM_017000919.1"/>
</dbReference>
<dbReference type="RefSeq" id="XP_016856409.1">
    <property type="nucleotide sequence ID" value="XM_017000920.1"/>
</dbReference>
<dbReference type="RefSeq" id="XP_047272892.1">
    <molecule id="Q5TGY1-1"/>
    <property type="nucleotide sequence ID" value="XM_047416936.1"/>
</dbReference>
<dbReference type="RefSeq" id="XP_047272899.1">
    <molecule id="Q5TGY1-1"/>
    <property type="nucleotide sequence ID" value="XM_047416943.1"/>
</dbReference>
<dbReference type="SMR" id="Q5TGY1"/>
<dbReference type="BioGRID" id="129076">
    <property type="interactions" value="14"/>
</dbReference>
<dbReference type="FunCoup" id="Q5TGY1">
    <property type="interactions" value="108"/>
</dbReference>
<dbReference type="IntAct" id="Q5TGY1">
    <property type="interactions" value="5"/>
</dbReference>
<dbReference type="MINT" id="Q5TGY1"/>
<dbReference type="STRING" id="9606.ENSP00000294543"/>
<dbReference type="ESTHER" id="human-TMCO4">
    <property type="family name" value="Duf_726"/>
</dbReference>
<dbReference type="iPTMnet" id="Q5TGY1"/>
<dbReference type="PhosphoSitePlus" id="Q5TGY1"/>
<dbReference type="BioMuta" id="TMCO4"/>
<dbReference type="DMDM" id="74746530"/>
<dbReference type="jPOST" id="Q5TGY1"/>
<dbReference type="MassIVE" id="Q5TGY1"/>
<dbReference type="PaxDb" id="9606-ENSP00000294543"/>
<dbReference type="PeptideAtlas" id="Q5TGY1"/>
<dbReference type="ProteomicsDB" id="65131">
    <molecule id="Q5TGY1-1"/>
</dbReference>
<dbReference type="ProteomicsDB" id="65132">
    <molecule id="Q5TGY1-2"/>
</dbReference>
<dbReference type="Pumba" id="Q5TGY1"/>
<dbReference type="Antibodypedia" id="3034">
    <property type="antibodies" value="77 antibodies from 14 providers"/>
</dbReference>
<dbReference type="DNASU" id="255104"/>
<dbReference type="Ensembl" id="ENST00000294543.11">
    <molecule id="Q5TGY1-1"/>
    <property type="protein sequence ID" value="ENSP00000294543.6"/>
    <property type="gene ID" value="ENSG00000162542.14"/>
</dbReference>
<dbReference type="GeneID" id="255104"/>
<dbReference type="KEGG" id="hsa:255104"/>
<dbReference type="MANE-Select" id="ENST00000294543.11">
    <property type="protein sequence ID" value="ENSP00000294543.6"/>
    <property type="RefSeq nucleotide sequence ID" value="NM_181719.7"/>
    <property type="RefSeq protein sequence ID" value="NP_859070.3"/>
</dbReference>
<dbReference type="UCSC" id="uc001bcn.3">
    <molecule id="Q5TGY1-1"/>
    <property type="organism name" value="human"/>
</dbReference>
<dbReference type="AGR" id="HGNC:27393"/>
<dbReference type="CTD" id="255104"/>
<dbReference type="DisGeNET" id="255104"/>
<dbReference type="GeneCards" id="TMCO4"/>
<dbReference type="HGNC" id="HGNC:27393">
    <property type="gene designation" value="TMCO4"/>
</dbReference>
<dbReference type="HPA" id="ENSG00000162542">
    <property type="expression patterns" value="Low tissue specificity"/>
</dbReference>
<dbReference type="neXtProt" id="NX_Q5TGY1"/>
<dbReference type="OpenTargets" id="ENSG00000162542"/>
<dbReference type="PharmGKB" id="PA142670794"/>
<dbReference type="VEuPathDB" id="HostDB:ENSG00000162542"/>
<dbReference type="eggNOG" id="KOG2385">
    <property type="taxonomic scope" value="Eukaryota"/>
</dbReference>
<dbReference type="GeneTree" id="ENSGT00390000001400"/>
<dbReference type="InParanoid" id="Q5TGY1"/>
<dbReference type="OMA" id="AGLYSYC"/>
<dbReference type="OrthoDB" id="277931at2759"/>
<dbReference type="PAN-GO" id="Q5TGY1">
    <property type="GO annotations" value="0 GO annotations based on evolutionary models"/>
</dbReference>
<dbReference type="PhylomeDB" id="Q5TGY1"/>
<dbReference type="TreeFam" id="TF312951"/>
<dbReference type="PathwayCommons" id="Q5TGY1"/>
<dbReference type="SignaLink" id="Q5TGY1"/>
<dbReference type="BioGRID-ORCS" id="255104">
    <property type="hits" value="15 hits in 1150 CRISPR screens"/>
</dbReference>
<dbReference type="ChiTaRS" id="TMCO4">
    <property type="organism name" value="human"/>
</dbReference>
<dbReference type="GenomeRNAi" id="255104"/>
<dbReference type="Pharos" id="Q5TGY1">
    <property type="development level" value="Tdark"/>
</dbReference>
<dbReference type="PRO" id="PR:Q5TGY1"/>
<dbReference type="Proteomes" id="UP000005640">
    <property type="component" value="Chromosome 1"/>
</dbReference>
<dbReference type="RNAct" id="Q5TGY1">
    <property type="molecule type" value="protein"/>
</dbReference>
<dbReference type="Bgee" id="ENSG00000162542">
    <property type="expression patterns" value="Expressed in lower esophagus mucosa and 140 other cell types or tissues"/>
</dbReference>
<dbReference type="ExpressionAtlas" id="Q5TGY1">
    <property type="expression patterns" value="baseline and differential"/>
</dbReference>
<dbReference type="GO" id="GO:0016020">
    <property type="term" value="C:membrane"/>
    <property type="evidence" value="ECO:0007669"/>
    <property type="project" value="UniProtKB-SubCell"/>
</dbReference>
<dbReference type="InterPro" id="IPR029058">
    <property type="entry name" value="AB_hydrolase_fold"/>
</dbReference>
<dbReference type="InterPro" id="IPR007941">
    <property type="entry name" value="DUF726"/>
</dbReference>
<dbReference type="PANTHER" id="PTHR17920:SF3">
    <property type="entry name" value="TRANSMEMBRANE AND COILED-COIL DOMAIN-CONTAINING PROTEIN 4"/>
    <property type="match status" value="1"/>
</dbReference>
<dbReference type="PANTHER" id="PTHR17920">
    <property type="entry name" value="TRANSMEMBRANE AND COILED-COIL DOMAIN-CONTAINING PROTEIN 4 TMCO4"/>
    <property type="match status" value="1"/>
</dbReference>
<dbReference type="Pfam" id="PF05277">
    <property type="entry name" value="DUF726"/>
    <property type="match status" value="1"/>
</dbReference>
<dbReference type="SUPFAM" id="SSF53474">
    <property type="entry name" value="alpha/beta-Hydrolases"/>
    <property type="match status" value="1"/>
</dbReference>
<gene>
    <name type="primary">TMCO4</name>
</gene>
<keyword id="KW-0025">Alternative splicing</keyword>
<keyword id="KW-0175">Coiled coil</keyword>
<keyword id="KW-0472">Membrane</keyword>
<keyword id="KW-1267">Proteomics identification</keyword>
<keyword id="KW-1185">Reference proteome</keyword>
<keyword id="KW-0812">Transmembrane</keyword>
<keyword id="KW-1133">Transmembrane helix</keyword>
<accession>Q5TGY1</accession>
<accession>Q5TGY2</accession>
<accession>Q6MZN5</accession>
<accession>Q7Z6K6</accession>
<accession>Q9UQP4</accession>
<accession>Q9Y3K1</accession>
<proteinExistence type="evidence at protein level"/>
<comment type="interaction">
    <interactant intactId="EBI-6530446">
        <id>Q5TGY1</id>
    </interactant>
    <interactant intactId="EBI-11141397">
        <id>Q9UBQ0-2</id>
        <label>VPS29</label>
    </interactant>
    <organismsDiffer>false</organismsDiffer>
    <experiments>5</experiments>
</comment>
<comment type="subcellular location">
    <subcellularLocation>
        <location evidence="6">Membrane</location>
        <topology evidence="6">Multi-pass membrane protein</topology>
    </subcellularLocation>
</comment>
<comment type="alternative products">
    <event type="alternative splicing"/>
    <isoform>
        <id>Q5TGY1-1</id>
        <name>1</name>
        <sequence type="displayed"/>
    </isoform>
    <isoform>
        <id>Q5TGY1-2</id>
        <name>2</name>
        <sequence type="described" ref="VSP_028242"/>
    </isoform>
</comment>
<comment type="similarity">
    <text evidence="6">Belongs to the TMCO4 family.</text>
</comment>
<comment type="sequence caution" evidence="6">
    <conflict type="erroneous initiation">
        <sequence resource="EMBL-CDS" id="CAB42850"/>
    </conflict>
</comment>
<comment type="sequence caution" evidence="6">
    <conflict type="erroneous initiation">
        <sequence resource="EMBL-CDS" id="CAB42851"/>
    </conflict>
</comment>
<feature type="chain" id="PRO_0000305149" description="Transmembrane and coiled-coil domain-containing protein 4">
    <location>
        <begin position="1"/>
        <end position="634"/>
    </location>
</feature>
<feature type="transmembrane region" description="Helical" evidence="1">
    <location>
        <begin position="203"/>
        <end position="223"/>
    </location>
</feature>
<feature type="transmembrane region" description="Helical" evidence="1">
    <location>
        <begin position="231"/>
        <end position="251"/>
    </location>
</feature>
<feature type="transmembrane region" description="Helical" evidence="1">
    <location>
        <begin position="346"/>
        <end position="366"/>
    </location>
</feature>
<feature type="region of interest" description="Disordered" evidence="2">
    <location>
        <begin position="542"/>
        <end position="612"/>
    </location>
</feature>
<feature type="coiled-coil region" evidence="1">
    <location>
        <begin position="150"/>
        <end position="190"/>
    </location>
</feature>
<feature type="compositionally biased region" description="Polar residues" evidence="2">
    <location>
        <begin position="552"/>
        <end position="583"/>
    </location>
</feature>
<feature type="splice variant" id="VSP_028242" description="In isoform 2." evidence="5">
    <location>
        <begin position="254"/>
        <end position="293"/>
    </location>
</feature>
<feature type="sequence variant" id="VAR_035169" description="In dbSNP:rs10917536.">
    <original>Q</original>
    <variation>K</variation>
    <location>
        <position position="72"/>
    </location>
</feature>
<feature type="sequence variant" id="VAR_035170" description="In dbSNP:rs4515815." evidence="3 4">
    <original>R</original>
    <variation>H</variation>
    <location>
        <position position="478"/>
    </location>
</feature>
<feature type="sequence conflict" description="In Ref. 1; CAE45994." evidence="6" ref="1">
    <original>P</original>
    <variation>S</variation>
    <location>
        <position position="605"/>
    </location>
</feature>
<evidence type="ECO:0000255" key="1"/>
<evidence type="ECO:0000256" key="2">
    <source>
        <dbReference type="SAM" id="MobiDB-lite"/>
    </source>
</evidence>
<evidence type="ECO:0000269" key="3">
    <source>
    </source>
</evidence>
<evidence type="ECO:0000269" key="4">
    <source>
    </source>
</evidence>
<evidence type="ECO:0000303" key="5">
    <source ref="4"/>
</evidence>
<evidence type="ECO:0000305" key="6"/>
<organism>
    <name type="scientific">Homo sapiens</name>
    <name type="common">Human</name>
    <dbReference type="NCBI Taxonomy" id="9606"/>
    <lineage>
        <taxon>Eukaryota</taxon>
        <taxon>Metazoa</taxon>
        <taxon>Chordata</taxon>
        <taxon>Craniata</taxon>
        <taxon>Vertebrata</taxon>
        <taxon>Euteleostomi</taxon>
        <taxon>Mammalia</taxon>
        <taxon>Eutheria</taxon>
        <taxon>Euarchontoglires</taxon>
        <taxon>Primates</taxon>
        <taxon>Haplorrhini</taxon>
        <taxon>Catarrhini</taxon>
        <taxon>Hominidae</taxon>
        <taxon>Homo</taxon>
    </lineage>
</organism>
<name>TMCO4_HUMAN</name>
<reference key="1">
    <citation type="journal article" date="2007" name="BMC Genomics">
        <title>The full-ORF clone resource of the German cDNA consortium.</title>
        <authorList>
            <person name="Bechtel S."/>
            <person name="Rosenfelder H."/>
            <person name="Duda A."/>
            <person name="Schmidt C.P."/>
            <person name="Ernst U."/>
            <person name="Wellenreuther R."/>
            <person name="Mehrle A."/>
            <person name="Schuster C."/>
            <person name="Bahr A."/>
            <person name="Bloecker H."/>
            <person name="Heubner D."/>
            <person name="Hoerlein A."/>
            <person name="Michel G."/>
            <person name="Wedler H."/>
            <person name="Koehrer K."/>
            <person name="Ottenwaelder B."/>
            <person name="Poustka A."/>
            <person name="Wiemann S."/>
            <person name="Schupp I."/>
        </authorList>
    </citation>
    <scope>NUCLEOTIDE SEQUENCE [LARGE SCALE MRNA] (ISOFORM 1)</scope>
    <scope>VARIANT HIS-478</scope>
    <source>
        <tissue>Small intestine</tissue>
    </source>
</reference>
<reference key="2">
    <citation type="journal article" date="2006" name="Nature">
        <title>The DNA sequence and biological annotation of human chromosome 1.</title>
        <authorList>
            <person name="Gregory S.G."/>
            <person name="Barlow K.F."/>
            <person name="McLay K.E."/>
            <person name="Kaul R."/>
            <person name="Swarbreck D."/>
            <person name="Dunham A."/>
            <person name="Scott C.E."/>
            <person name="Howe K.L."/>
            <person name="Woodfine K."/>
            <person name="Spencer C.C.A."/>
            <person name="Jones M.C."/>
            <person name="Gillson C."/>
            <person name="Searle S."/>
            <person name="Zhou Y."/>
            <person name="Kokocinski F."/>
            <person name="McDonald L."/>
            <person name="Evans R."/>
            <person name="Phillips K."/>
            <person name="Atkinson A."/>
            <person name="Cooper R."/>
            <person name="Jones C."/>
            <person name="Hall R.E."/>
            <person name="Andrews T.D."/>
            <person name="Lloyd C."/>
            <person name="Ainscough R."/>
            <person name="Almeida J.P."/>
            <person name="Ambrose K.D."/>
            <person name="Anderson F."/>
            <person name="Andrew R.W."/>
            <person name="Ashwell R.I.S."/>
            <person name="Aubin K."/>
            <person name="Babbage A.K."/>
            <person name="Bagguley C.L."/>
            <person name="Bailey J."/>
            <person name="Beasley H."/>
            <person name="Bethel G."/>
            <person name="Bird C.P."/>
            <person name="Bray-Allen S."/>
            <person name="Brown J.Y."/>
            <person name="Brown A.J."/>
            <person name="Buckley D."/>
            <person name="Burton J."/>
            <person name="Bye J."/>
            <person name="Carder C."/>
            <person name="Chapman J.C."/>
            <person name="Clark S.Y."/>
            <person name="Clarke G."/>
            <person name="Clee C."/>
            <person name="Cobley V."/>
            <person name="Collier R.E."/>
            <person name="Corby N."/>
            <person name="Coville G.J."/>
            <person name="Davies J."/>
            <person name="Deadman R."/>
            <person name="Dunn M."/>
            <person name="Earthrowl M."/>
            <person name="Ellington A.G."/>
            <person name="Errington H."/>
            <person name="Frankish A."/>
            <person name="Frankland J."/>
            <person name="French L."/>
            <person name="Garner P."/>
            <person name="Garnett J."/>
            <person name="Gay L."/>
            <person name="Ghori M.R.J."/>
            <person name="Gibson R."/>
            <person name="Gilby L.M."/>
            <person name="Gillett W."/>
            <person name="Glithero R.J."/>
            <person name="Grafham D.V."/>
            <person name="Griffiths C."/>
            <person name="Griffiths-Jones S."/>
            <person name="Grocock R."/>
            <person name="Hammond S."/>
            <person name="Harrison E.S.I."/>
            <person name="Hart E."/>
            <person name="Haugen E."/>
            <person name="Heath P.D."/>
            <person name="Holmes S."/>
            <person name="Holt K."/>
            <person name="Howden P.J."/>
            <person name="Hunt A.R."/>
            <person name="Hunt S.E."/>
            <person name="Hunter G."/>
            <person name="Isherwood J."/>
            <person name="James R."/>
            <person name="Johnson C."/>
            <person name="Johnson D."/>
            <person name="Joy A."/>
            <person name="Kay M."/>
            <person name="Kershaw J.K."/>
            <person name="Kibukawa M."/>
            <person name="Kimberley A.M."/>
            <person name="King A."/>
            <person name="Knights A.J."/>
            <person name="Lad H."/>
            <person name="Laird G."/>
            <person name="Lawlor S."/>
            <person name="Leongamornlert D.A."/>
            <person name="Lloyd D.M."/>
            <person name="Loveland J."/>
            <person name="Lovell J."/>
            <person name="Lush M.J."/>
            <person name="Lyne R."/>
            <person name="Martin S."/>
            <person name="Mashreghi-Mohammadi M."/>
            <person name="Matthews L."/>
            <person name="Matthews N.S.W."/>
            <person name="McLaren S."/>
            <person name="Milne S."/>
            <person name="Mistry S."/>
            <person name="Moore M.J.F."/>
            <person name="Nickerson T."/>
            <person name="O'Dell C.N."/>
            <person name="Oliver K."/>
            <person name="Palmeiri A."/>
            <person name="Palmer S.A."/>
            <person name="Parker A."/>
            <person name="Patel D."/>
            <person name="Pearce A.V."/>
            <person name="Peck A.I."/>
            <person name="Pelan S."/>
            <person name="Phelps K."/>
            <person name="Phillimore B.J."/>
            <person name="Plumb R."/>
            <person name="Rajan J."/>
            <person name="Raymond C."/>
            <person name="Rouse G."/>
            <person name="Saenphimmachak C."/>
            <person name="Sehra H.K."/>
            <person name="Sheridan E."/>
            <person name="Shownkeen R."/>
            <person name="Sims S."/>
            <person name="Skuce C.D."/>
            <person name="Smith M."/>
            <person name="Steward C."/>
            <person name="Subramanian S."/>
            <person name="Sycamore N."/>
            <person name="Tracey A."/>
            <person name="Tromans A."/>
            <person name="Van Helmond Z."/>
            <person name="Wall M."/>
            <person name="Wallis J.M."/>
            <person name="White S."/>
            <person name="Whitehead S.L."/>
            <person name="Wilkinson J.E."/>
            <person name="Willey D.L."/>
            <person name="Williams H."/>
            <person name="Wilming L."/>
            <person name="Wray P.W."/>
            <person name="Wu Z."/>
            <person name="Coulson A."/>
            <person name="Vaudin M."/>
            <person name="Sulston J.E."/>
            <person name="Durbin R.M."/>
            <person name="Hubbard T."/>
            <person name="Wooster R."/>
            <person name="Dunham I."/>
            <person name="Carter N.P."/>
            <person name="McVean G."/>
            <person name="Ross M.T."/>
            <person name="Harrow J."/>
            <person name="Olson M.V."/>
            <person name="Beck S."/>
            <person name="Rogers J."/>
            <person name="Bentley D.R."/>
        </authorList>
    </citation>
    <scope>NUCLEOTIDE SEQUENCE [LARGE SCALE GENOMIC DNA]</scope>
</reference>
<reference key="3">
    <citation type="journal article" date="2004" name="Genome Res.">
        <title>The status, quality, and expansion of the NIH full-length cDNA project: the Mammalian Gene Collection (MGC).</title>
        <authorList>
            <consortium name="The MGC Project Team"/>
        </authorList>
    </citation>
    <scope>NUCLEOTIDE SEQUENCE [LARGE SCALE MRNA] (ISOFORM 1)</scope>
    <scope>VARIANT HIS-478</scope>
    <source>
        <tissue>Brain</tissue>
    </source>
</reference>
<reference key="4">
    <citation type="submission" date="1999-05" db="EMBL/GenBank/DDBJ databases">
        <authorList>
            <person name="Rhodes S."/>
        </authorList>
    </citation>
    <scope>NUCLEOTIDE SEQUENCE [LARGE SCALE MRNA] OF 1-421 (ISOFORMS 1 AND 2)</scope>
</reference>